<proteinExistence type="evidence at protein level"/>
<accession>P02705</accession>
<reference key="1">
    <citation type="journal article" date="1994" name="Biochim. Biophys. Acta">
        <title>Molecular cloning and expression of two horse pancreatic cDNA encoding colipase A and B.</title>
        <authorList>
            <person name="Crenon I."/>
            <person name="Granon S."/>
            <person name="Chapus C."/>
            <person name="Kerfelec B."/>
        </authorList>
    </citation>
    <scope>NUCLEOTIDE SEQUENCE [MRNA]</scope>
    <source>
        <tissue>Pancreas</tissue>
    </source>
</reference>
<reference key="2">
    <citation type="journal article" date="1981" name="Biochim. Biophys. Acta">
        <title>Amino acid sequence of horse colipase B.</title>
        <authorList>
            <person name="Bonicel J.J."/>
            <person name="Couchoud P.M."/>
            <person name="Foglizzo E."/>
            <person name="Desnuelle P."/>
            <person name="Chapus C."/>
        </authorList>
    </citation>
    <scope>PROTEIN SEQUENCE OF 14-108</scope>
    <source>
        <tissue>Pancreas</tissue>
    </source>
</reference>
<reference key="3">
    <citation type="journal article" date="1980" name="Biochem. Biophys. Res. Commun.">
        <title>Evidence for the existence of two isocolipases in horse pancreas.</title>
        <authorList>
            <person name="Julien R."/>
            <person name="Bechis G."/>
            <person name="Gregoire J."/>
            <person name="Rathelot J."/>
            <person name="Rochat H."/>
            <person name="Sarda L."/>
        </authorList>
    </citation>
    <scope>PROTEIN SEQUENCE OF 14-68</scope>
</reference>
<sequence length="108" mass="11618">LALLLVALAVAYAVPDPRGVIINLEAGEICMNSAQCKSECCHRESSLSLARCAAKASENSECSAWTLYGVYYKCPCERGLTCQVDKTLVGSIMNTNFGICFDAARSEE</sequence>
<comment type="function">
    <text>Colipase is a cofactor of pancreatic lipase. It allows the lipase to anchor itself to the lipid-water interface. Without colipase the enzyme is washed off by bile salts, which have an inhibitory effect on the lipase.</text>
</comment>
<comment type="function">
    <text>Enterostatin has a biological activity as a satiety signal.</text>
</comment>
<comment type="subunit">
    <text>Forms a 1:1 stoichiometric complex with pancreatic lipase.</text>
</comment>
<comment type="subcellular location">
    <subcellularLocation>
        <location>Secreted</location>
    </subcellularLocation>
</comment>
<comment type="tissue specificity">
    <text>Expressed by the pancreas.</text>
</comment>
<comment type="similarity">
    <text evidence="2">Belongs to the colipase family.</text>
</comment>
<feature type="signal peptide" evidence="3 4">
    <location>
        <begin position="1" status="less than"/>
        <end position="13"/>
    </location>
</feature>
<feature type="propeptide" id="PRO_0000005694" description="Enterostatin, activation peptide">
    <location>
        <begin position="14"/>
        <end position="18"/>
    </location>
</feature>
<feature type="chain" id="PRO_0000005695" description="Colipase B">
    <location>
        <begin position="19"/>
        <end position="108"/>
    </location>
</feature>
<feature type="binding site" evidence="1">
    <location>
        <position position="65"/>
    </location>
    <ligand>
        <name>taurodeoxycholate</name>
        <dbReference type="ChEBI" id="CHEBI:36261"/>
    </ligand>
</feature>
<feature type="disulfide bond" evidence="2">
    <location>
        <begin position="30"/>
        <end position="41"/>
    </location>
</feature>
<feature type="disulfide bond" evidence="2">
    <location>
        <begin position="36"/>
        <end position="52"/>
    </location>
</feature>
<feature type="disulfide bond" evidence="2">
    <location>
        <begin position="40"/>
        <end position="74"/>
    </location>
</feature>
<feature type="disulfide bond" evidence="2">
    <location>
        <begin position="62"/>
        <end position="82"/>
    </location>
</feature>
<feature type="disulfide bond" evidence="2">
    <location>
        <begin position="76"/>
        <end position="100"/>
    </location>
</feature>
<feature type="sequence conflict" description="In Ref. 3; AA sequence." evidence="5" ref="3">
    <original>Q</original>
    <variation>E</variation>
    <location>
        <position position="35"/>
    </location>
</feature>
<feature type="sequence conflict" description="In Ref. 3; AA sequence." evidence="5" ref="3">
    <original>H</original>
    <variation>T</variation>
    <location>
        <position position="42"/>
    </location>
</feature>
<feature type="sequence conflict" description="In Ref. 2; AA sequence." evidence="5" ref="2">
    <original>E</original>
    <variation>ER</variation>
    <location>
        <position position="108"/>
    </location>
</feature>
<feature type="non-terminal residue">
    <location>
        <position position="1"/>
    </location>
</feature>
<name>COLB_HORSE</name>
<protein>
    <recommendedName>
        <fullName>Colipase B</fullName>
    </recommendedName>
</protein>
<dbReference type="EMBL" id="X74344">
    <property type="protein sequence ID" value="CAA52391.1"/>
    <property type="molecule type" value="mRNA"/>
</dbReference>
<dbReference type="PIR" id="A03165">
    <property type="entry name" value="XLHOB"/>
</dbReference>
<dbReference type="SMR" id="P02705"/>
<dbReference type="FunCoup" id="P02705">
    <property type="interactions" value="51"/>
</dbReference>
<dbReference type="STRING" id="9796.ENSECAP00000010040"/>
<dbReference type="PaxDb" id="9796-ENSECAP00000010040"/>
<dbReference type="HOGENOM" id="CLU_165591_0_0_1"/>
<dbReference type="InParanoid" id="P02705"/>
<dbReference type="Proteomes" id="UP000002281">
    <property type="component" value="Unplaced"/>
</dbReference>
<dbReference type="GO" id="GO:0005576">
    <property type="term" value="C:extracellular region"/>
    <property type="evidence" value="ECO:0007669"/>
    <property type="project" value="UniProtKB-SubCell"/>
</dbReference>
<dbReference type="GO" id="GO:0008047">
    <property type="term" value="F:enzyme activator activity"/>
    <property type="evidence" value="ECO:0007669"/>
    <property type="project" value="InterPro"/>
</dbReference>
<dbReference type="GO" id="GO:0035473">
    <property type="term" value="F:lipase binding"/>
    <property type="evidence" value="ECO:0007669"/>
    <property type="project" value="InterPro"/>
</dbReference>
<dbReference type="GO" id="GO:0007586">
    <property type="term" value="P:digestion"/>
    <property type="evidence" value="ECO:0007669"/>
    <property type="project" value="UniProtKB-KW"/>
</dbReference>
<dbReference type="GO" id="GO:0016042">
    <property type="term" value="P:lipid catabolic process"/>
    <property type="evidence" value="ECO:0007669"/>
    <property type="project" value="UniProtKB-KW"/>
</dbReference>
<dbReference type="GO" id="GO:0032094">
    <property type="term" value="P:response to food"/>
    <property type="evidence" value="ECO:0000318"/>
    <property type="project" value="GO_Central"/>
</dbReference>
<dbReference type="CDD" id="cd23011">
    <property type="entry name" value="CLPS"/>
    <property type="match status" value="1"/>
</dbReference>
<dbReference type="FunFam" id="2.10.80.10:FF:000005">
    <property type="entry name" value="Colipase"/>
    <property type="match status" value="1"/>
</dbReference>
<dbReference type="Gene3D" id="2.10.80.10">
    <property type="entry name" value="Lipase, subunit A"/>
    <property type="match status" value="1"/>
</dbReference>
<dbReference type="InterPro" id="IPR047576">
    <property type="entry name" value="CLPS_chr"/>
</dbReference>
<dbReference type="InterPro" id="IPR001981">
    <property type="entry name" value="Colipase"/>
</dbReference>
<dbReference type="InterPro" id="IPR017914">
    <property type="entry name" value="Colipase_C"/>
</dbReference>
<dbReference type="InterPro" id="IPR017915">
    <property type="entry name" value="Colipase_CS"/>
</dbReference>
<dbReference type="InterPro" id="IPR017913">
    <property type="entry name" value="Colipase_N"/>
</dbReference>
<dbReference type="PANTHER" id="PTHR10041">
    <property type="entry name" value="COLIPASE"/>
    <property type="match status" value="1"/>
</dbReference>
<dbReference type="PANTHER" id="PTHR10041:SF8">
    <property type="entry name" value="COLIPASE"/>
    <property type="match status" value="1"/>
</dbReference>
<dbReference type="Pfam" id="PF01114">
    <property type="entry name" value="Colipase"/>
    <property type="match status" value="1"/>
</dbReference>
<dbReference type="Pfam" id="PF02740">
    <property type="entry name" value="Colipase_C"/>
    <property type="match status" value="1"/>
</dbReference>
<dbReference type="PRINTS" id="PR00128">
    <property type="entry name" value="COLIPASE"/>
</dbReference>
<dbReference type="SMART" id="SM00023">
    <property type="entry name" value="COLIPASE"/>
    <property type="match status" value="1"/>
</dbReference>
<dbReference type="SUPFAM" id="SSF57190">
    <property type="entry name" value="Colipase-like"/>
    <property type="match status" value="2"/>
</dbReference>
<dbReference type="PROSITE" id="PS00121">
    <property type="entry name" value="COLIPASE_1"/>
    <property type="match status" value="1"/>
</dbReference>
<dbReference type="PROSITE" id="PS51342">
    <property type="entry name" value="COLIPASE_2"/>
    <property type="match status" value="1"/>
</dbReference>
<organism>
    <name type="scientific">Equus caballus</name>
    <name type="common">Horse</name>
    <dbReference type="NCBI Taxonomy" id="9796"/>
    <lineage>
        <taxon>Eukaryota</taxon>
        <taxon>Metazoa</taxon>
        <taxon>Chordata</taxon>
        <taxon>Craniata</taxon>
        <taxon>Vertebrata</taxon>
        <taxon>Euteleostomi</taxon>
        <taxon>Mammalia</taxon>
        <taxon>Eutheria</taxon>
        <taxon>Laurasiatheria</taxon>
        <taxon>Perissodactyla</taxon>
        <taxon>Equidae</taxon>
        <taxon>Equus</taxon>
    </lineage>
</organism>
<keyword id="KW-0222">Digestion</keyword>
<keyword id="KW-0903">Direct protein sequencing</keyword>
<keyword id="KW-1015">Disulfide bond</keyword>
<keyword id="KW-0442">Lipid degradation</keyword>
<keyword id="KW-0443">Lipid metabolism</keyword>
<keyword id="KW-1185">Reference proteome</keyword>
<keyword id="KW-0964">Secreted</keyword>
<keyword id="KW-0732">Signal</keyword>
<evidence type="ECO:0000250" key="1">
    <source>
        <dbReference type="UniProtKB" id="P02704"/>
    </source>
</evidence>
<evidence type="ECO:0000255" key="2">
    <source>
        <dbReference type="PROSITE-ProRule" id="PRU00674"/>
    </source>
</evidence>
<evidence type="ECO:0000269" key="3">
    <source>
    </source>
</evidence>
<evidence type="ECO:0000269" key="4">
    <source>
    </source>
</evidence>
<evidence type="ECO:0000305" key="5"/>
<gene>
    <name type="primary">CLPS2</name>
</gene>